<feature type="chain" id="PRO_0000408736" description="Regulator of G-protein signaling loco">
    <location>
        <begin position="1"/>
        <end position="1541"/>
    </location>
</feature>
<feature type="domain" description="PDZ" evidence="2">
    <location>
        <begin position="71"/>
        <end position="148"/>
    </location>
</feature>
<feature type="domain" description="PID" evidence="3">
    <location>
        <begin position="247"/>
        <end position="423"/>
    </location>
</feature>
<feature type="domain" description="RGS" evidence="4">
    <location>
        <begin position="827"/>
        <end position="943"/>
    </location>
</feature>
<feature type="domain" description="RBD 1" evidence="5">
    <location>
        <begin position="1072"/>
        <end position="1142"/>
    </location>
</feature>
<feature type="domain" description="RBD 2" evidence="5">
    <location>
        <begin position="1143"/>
        <end position="1213"/>
    </location>
</feature>
<feature type="domain" description="GoLoco" evidence="1">
    <location>
        <begin position="1354"/>
        <end position="1376"/>
    </location>
</feature>
<feature type="region of interest" description="Disordered" evidence="6">
    <location>
        <begin position="1"/>
        <end position="66"/>
    </location>
</feature>
<feature type="region of interest" description="Disordered" evidence="6">
    <location>
        <begin position="182"/>
        <end position="222"/>
    </location>
</feature>
<feature type="region of interest" description="Disordered" evidence="6">
    <location>
        <begin position="449"/>
        <end position="473"/>
    </location>
</feature>
<feature type="region of interest" description="Disordered" evidence="6">
    <location>
        <begin position="708"/>
        <end position="761"/>
    </location>
</feature>
<feature type="region of interest" description="Disordered" evidence="6">
    <location>
        <begin position="978"/>
        <end position="1004"/>
    </location>
</feature>
<feature type="region of interest" description="Disordered" evidence="6">
    <location>
        <begin position="1258"/>
        <end position="1327"/>
    </location>
</feature>
<feature type="region of interest" description="Disordered" evidence="6">
    <location>
        <begin position="1410"/>
        <end position="1513"/>
    </location>
</feature>
<feature type="compositionally biased region" description="Low complexity" evidence="6">
    <location>
        <begin position="11"/>
        <end position="36"/>
    </location>
</feature>
<feature type="compositionally biased region" description="Polar residues" evidence="6">
    <location>
        <begin position="40"/>
        <end position="53"/>
    </location>
</feature>
<feature type="compositionally biased region" description="Basic and acidic residues" evidence="6">
    <location>
        <begin position="201"/>
        <end position="214"/>
    </location>
</feature>
<feature type="compositionally biased region" description="Polar residues" evidence="6">
    <location>
        <begin position="457"/>
        <end position="473"/>
    </location>
</feature>
<feature type="compositionally biased region" description="Polar residues" evidence="6">
    <location>
        <begin position="744"/>
        <end position="761"/>
    </location>
</feature>
<feature type="compositionally biased region" description="Basic residues" evidence="6">
    <location>
        <begin position="987"/>
        <end position="999"/>
    </location>
</feature>
<feature type="compositionally biased region" description="Polar residues" evidence="6">
    <location>
        <begin position="1273"/>
        <end position="1285"/>
    </location>
</feature>
<feature type="compositionally biased region" description="Low complexity" evidence="6">
    <location>
        <begin position="1312"/>
        <end position="1325"/>
    </location>
</feature>
<feature type="compositionally biased region" description="Pro residues" evidence="6">
    <location>
        <begin position="1460"/>
        <end position="1469"/>
    </location>
</feature>
<feature type="compositionally biased region" description="Polar residues" evidence="6">
    <location>
        <begin position="1483"/>
        <end position="1499"/>
    </location>
</feature>
<feature type="splice variant" id="VSP_041115" description="In isoform 2." evidence="12">
    <location>
        <begin position="1"/>
        <end position="712"/>
    </location>
</feature>
<feature type="splice variant" id="VSP_041114" description="In isoform 4." evidence="13">
    <location>
        <begin position="1"/>
        <end position="669"/>
    </location>
</feature>
<feature type="splice variant" id="VSP_041116" description="In isoform 3." evidence="12">
    <location>
        <begin position="1"/>
        <end position="367"/>
    </location>
</feature>
<feature type="splice variant" id="VSP_041117" description="In isoform 3." evidence="12">
    <original>SCHVFVIDTKLIEHAQHLQRAHEFRLQCTRDPISNLCLEFPNNSEYVVNLVRSMYTMRILPPASRSHQADYEAGAGAAAAGGAVAAAHSPQPSNHSEISTTTSNSDSGIGFNNDCTNISDRILVVDFLAAGAGAAAAAHAGPPTYPAPARPLGIVGIPDNRLTVRAMPDHSALLRSPPASSSLRRPNLLASFNLIQSPATNLTSTRSCDDVLNLFVDDSPRTLAAVASMDDISLHSAAPSLDEGHTFAHPACVPRKMRRSLALETPTTPHKLSAQVFGQPGSRHSLGFEAIDSVQSSVSGACMDQTMDTWASLQNLHKSHKDRTSMSASSSSHCLLEATNSEPDLG</original>
    <variation>MNNTNTTRGTCSRIPIARNQEPTIASMVERFVQSLSQLNDSGTFDSSFEIKRIHPGSSAGSTPKHVRHRCLTELDREQLTRFVQDFEERQASTPKIKSKISSPYICRKAKEFYQSASGRRSASPQITIAPETVQEEKVLVNPLPRKCAEAEDLMPPPMAMARVQAERRSCRSASRVLQFFSSATKRRSGNRKLSEPEMEDNRADSPVLIRVTRDRVEEQLGCSPLAASGGEVPTSSEDEEEHDDGISSASSNLTSQSGSSNSRNLSPDSSFEMHAPLLPSFKVTPPRAVCRVGKNAACEFARFLRGSFHSKRASVTTLRRSLSDPDAVQQMDFSKPPPLRDTTNVMR</variation>
    <location>
        <begin position="368"/>
        <end position="713"/>
    </location>
</feature>
<feature type="splice variant" id="VSP_041118" description="In isoform 2." evidence="12">
    <original>G</original>
    <variation>M</variation>
    <location>
        <position position="713"/>
    </location>
</feature>
<feature type="sequence conflict" description="In Ref. 1; AAD24580/AAD24581." evidence="14" ref="1">
    <original>A</original>
    <variation>T</variation>
    <location>
        <position position="1326"/>
    </location>
</feature>
<organism>
    <name type="scientific">Drosophila melanogaster</name>
    <name type="common">Fruit fly</name>
    <dbReference type="NCBI Taxonomy" id="7227"/>
    <lineage>
        <taxon>Eukaryota</taxon>
        <taxon>Metazoa</taxon>
        <taxon>Ecdysozoa</taxon>
        <taxon>Arthropoda</taxon>
        <taxon>Hexapoda</taxon>
        <taxon>Insecta</taxon>
        <taxon>Pterygota</taxon>
        <taxon>Neoptera</taxon>
        <taxon>Endopterygota</taxon>
        <taxon>Diptera</taxon>
        <taxon>Brachycera</taxon>
        <taxon>Muscomorpha</taxon>
        <taxon>Ephydroidea</taxon>
        <taxon>Drosophilidae</taxon>
        <taxon>Drosophila</taxon>
        <taxon>Sophophora</taxon>
    </lineage>
</organism>
<sequence>MHHHHPPLPITGASGSTAVGTGAAAAEDASPAANSGPAPISTSTTPSGSNSQQHQRRRKKRANYNYNGIRTVEVRRGYNGFGFTISGQQPCRLSCIISSSPAEQAGLRSGDFLISVNGLNVSKLPHETVVQLIGNSFGSIRMQIAENYYSDSSDEENAHATLRGQLLAASLRHKPRFLHHKAKLHRLRNSPQKKLNPPEAVEPHKSKSSPDHPTLKPVLEDPPLTANLSKAADVANVSAMVRAVGSAALECRVIVGYLGTIEMPKQISHSSKLQTVRSCIRKLRQEKRQPTIVLMCITPDSLSLQSSSGGVLATYSSARLNFVSSSSESENRFFGLVTSAVHNTQIEEEYEPSAGSAAAAGHISISHSCHVFVIDTKLIEHAQHLQRAHEFRLQCTRDPISNLCLEFPNNSEYVVNLVRSMYTMRILPPASRSHQADYEAGAGAAAAGGAVAAAHSPQPSNHSEISTTTSNSDSGIGFNNDCTNISDRILVVDFLAAGAGAAAAAHAGPPTYPAPARPLGIVGIPDNRLTVRAMPDHSALLRSPPASSSLRRPNLLASFNLIQSPATNLTSTRSCDDVLNLFVDDSPRTLAAVASMDDISLHSAAPSLDEGHTFAHPACVPRKMRRSLALETPTTPHKLSAQVFGQPGSRHSLGFEAIDSVQSSVSGACMDQTMDTWASLQNLHKSHKDRTSMSASSSSHCLLEATNSEPDLGNRALPANASPFRRAWGQSSFRTPRSDKVAKEQQQLGQSSPVRRTASMNASDNDMYIKTLMLDSDLKSSRSQHQLSLLQVPKVLTTPAPPSAITASVAAEGAAQDHGCPSSWAGSFERMLQDAAGMQTFSEFLKKEFSAENIYFWTACERYRLLESEADRVAQAREIFAKHLANNSSDPVNVDSQARSLTEEKLADAAPDIFAPAQKQIFSLMKFDSYQRFIRSDLYKSCVEAEQKNQPLPYSGLDLDELLKTNFHLGAFSKLKKSASNAEDRRRKSLLPWHRKTRSKSRDRTEIMADMQHALMPAPPVPQNAPLTSASLKLVCGQNSLSDLHSSRSSLSSFDAGTATGGQGASTESVYSLCRVILTDGATTIVQTRPGETVGELVERLLEKRNLVYPYYDIVFQGSTKSIDVQQPSQILAGKEVVIERRVAFKLDLPDPKVISVKSKPKKQLHEVIRPILSKYNYKMEQVQVIMRDTQVPIDLNQPVTMADGQRLRIVMVNSDFQVGGGSSMPPKQSKPMKPLPQGHLDELTNKVFNELLASKADAAASEKSRPVDLCSMKSNEAPSETSSLFERMRRQQRDGGNIPASKLPKLKKKSTSSSQQSEEAATTQAVADPKKPIIAKLKAGVKLQVTERVAEHQDELLEGLKRAQLARLEDQRGTEINFDLPDFLKNKENLSAAVSKLRKVRASLSPVSKVPATPTEIPQPAPRLSITRSQQPVSPMKVDQEPETDLPAATQDQTEFAKAPPPLPPKPKVLPIKPSNWGVAQPTGNYCNKYSPSKQVPTSPKEASKPGTFASKIPLDLGRKSLEEAGSRCAYLDEPSSSFV</sequence>
<reference key="1">
    <citation type="journal article" date="1999" name="Development">
        <title>loco encodes an RGS protein required for Drosophila glial differentiation.</title>
        <authorList>
            <person name="Granderath S."/>
            <person name="Stollewerk A."/>
            <person name="Greig S."/>
            <person name="Goodman C.S."/>
            <person name="O'Kane C.J."/>
            <person name="Klambt C."/>
        </authorList>
    </citation>
    <scope>NUCLEOTIDE SEQUENCE [MRNA] (ISOFORMS 2 AND 3)</scope>
    <scope>FUNCTION</scope>
    <scope>INTERACTION WITH GALPHAI</scope>
    <scope>DEVELOPMENTAL STAGE</scope>
    <scope>DISRUPTION PHENOTYPE</scope>
</reference>
<reference key="2">
    <citation type="journal article" date="2001" name="Mech. Dev.">
        <title>The Drosophila RGS protein Loco is required for dorsal/ventral axis formation of the egg and embryo, and nurse cell dumping.</title>
        <authorList>
            <person name="Pathirana S."/>
            <person name="Zhao D."/>
            <person name="Bownes M."/>
        </authorList>
    </citation>
    <scope>NUCLEOTIDE SEQUENCE [MRNA] (ISOFORM 4)</scope>
    <scope>FUNCTION</scope>
    <scope>DEVELOPMENTAL STAGE</scope>
    <source>
        <tissue>Ovary</tissue>
    </source>
</reference>
<reference key="3">
    <citation type="journal article" date="2000" name="Science">
        <title>The genome sequence of Drosophila melanogaster.</title>
        <authorList>
            <person name="Adams M.D."/>
            <person name="Celniker S.E."/>
            <person name="Holt R.A."/>
            <person name="Evans C.A."/>
            <person name="Gocayne J.D."/>
            <person name="Amanatides P.G."/>
            <person name="Scherer S.E."/>
            <person name="Li P.W."/>
            <person name="Hoskins R.A."/>
            <person name="Galle R.F."/>
            <person name="George R.A."/>
            <person name="Lewis S.E."/>
            <person name="Richards S."/>
            <person name="Ashburner M."/>
            <person name="Henderson S.N."/>
            <person name="Sutton G.G."/>
            <person name="Wortman J.R."/>
            <person name="Yandell M.D."/>
            <person name="Zhang Q."/>
            <person name="Chen L.X."/>
            <person name="Brandon R.C."/>
            <person name="Rogers Y.-H.C."/>
            <person name="Blazej R.G."/>
            <person name="Champe M."/>
            <person name="Pfeiffer B.D."/>
            <person name="Wan K.H."/>
            <person name="Doyle C."/>
            <person name="Baxter E.G."/>
            <person name="Helt G."/>
            <person name="Nelson C.R."/>
            <person name="Miklos G.L.G."/>
            <person name="Abril J.F."/>
            <person name="Agbayani A."/>
            <person name="An H.-J."/>
            <person name="Andrews-Pfannkoch C."/>
            <person name="Baldwin D."/>
            <person name="Ballew R.M."/>
            <person name="Basu A."/>
            <person name="Baxendale J."/>
            <person name="Bayraktaroglu L."/>
            <person name="Beasley E.M."/>
            <person name="Beeson K.Y."/>
            <person name="Benos P.V."/>
            <person name="Berman B.P."/>
            <person name="Bhandari D."/>
            <person name="Bolshakov S."/>
            <person name="Borkova D."/>
            <person name="Botchan M.R."/>
            <person name="Bouck J."/>
            <person name="Brokstein P."/>
            <person name="Brottier P."/>
            <person name="Burtis K.C."/>
            <person name="Busam D.A."/>
            <person name="Butler H."/>
            <person name="Cadieu E."/>
            <person name="Center A."/>
            <person name="Chandra I."/>
            <person name="Cherry J.M."/>
            <person name="Cawley S."/>
            <person name="Dahlke C."/>
            <person name="Davenport L.B."/>
            <person name="Davies P."/>
            <person name="de Pablos B."/>
            <person name="Delcher A."/>
            <person name="Deng Z."/>
            <person name="Mays A.D."/>
            <person name="Dew I."/>
            <person name="Dietz S.M."/>
            <person name="Dodson K."/>
            <person name="Doup L.E."/>
            <person name="Downes M."/>
            <person name="Dugan-Rocha S."/>
            <person name="Dunkov B.C."/>
            <person name="Dunn P."/>
            <person name="Durbin K.J."/>
            <person name="Evangelista C.C."/>
            <person name="Ferraz C."/>
            <person name="Ferriera S."/>
            <person name="Fleischmann W."/>
            <person name="Fosler C."/>
            <person name="Gabrielian A.E."/>
            <person name="Garg N.S."/>
            <person name="Gelbart W.M."/>
            <person name="Glasser K."/>
            <person name="Glodek A."/>
            <person name="Gong F."/>
            <person name="Gorrell J.H."/>
            <person name="Gu Z."/>
            <person name="Guan P."/>
            <person name="Harris M."/>
            <person name="Harris N.L."/>
            <person name="Harvey D.A."/>
            <person name="Heiman T.J."/>
            <person name="Hernandez J.R."/>
            <person name="Houck J."/>
            <person name="Hostin D."/>
            <person name="Houston K.A."/>
            <person name="Howland T.J."/>
            <person name="Wei M.-H."/>
            <person name="Ibegwam C."/>
            <person name="Jalali M."/>
            <person name="Kalush F."/>
            <person name="Karpen G.H."/>
            <person name="Ke Z."/>
            <person name="Kennison J.A."/>
            <person name="Ketchum K.A."/>
            <person name="Kimmel B.E."/>
            <person name="Kodira C.D."/>
            <person name="Kraft C.L."/>
            <person name="Kravitz S."/>
            <person name="Kulp D."/>
            <person name="Lai Z."/>
            <person name="Lasko P."/>
            <person name="Lei Y."/>
            <person name="Levitsky A.A."/>
            <person name="Li J.H."/>
            <person name="Li Z."/>
            <person name="Liang Y."/>
            <person name="Lin X."/>
            <person name="Liu X."/>
            <person name="Mattei B."/>
            <person name="McIntosh T.C."/>
            <person name="McLeod M.P."/>
            <person name="McPherson D."/>
            <person name="Merkulov G."/>
            <person name="Milshina N.V."/>
            <person name="Mobarry C."/>
            <person name="Morris J."/>
            <person name="Moshrefi A."/>
            <person name="Mount S.M."/>
            <person name="Moy M."/>
            <person name="Murphy B."/>
            <person name="Murphy L."/>
            <person name="Muzny D.M."/>
            <person name="Nelson D.L."/>
            <person name="Nelson D.R."/>
            <person name="Nelson K.A."/>
            <person name="Nixon K."/>
            <person name="Nusskern D.R."/>
            <person name="Pacleb J.M."/>
            <person name="Palazzolo M."/>
            <person name="Pittman G.S."/>
            <person name="Pan S."/>
            <person name="Pollard J."/>
            <person name="Puri V."/>
            <person name="Reese M.G."/>
            <person name="Reinert K."/>
            <person name="Remington K."/>
            <person name="Saunders R.D.C."/>
            <person name="Scheeler F."/>
            <person name="Shen H."/>
            <person name="Shue B.C."/>
            <person name="Siden-Kiamos I."/>
            <person name="Simpson M."/>
            <person name="Skupski M.P."/>
            <person name="Smith T.J."/>
            <person name="Spier E."/>
            <person name="Spradling A.C."/>
            <person name="Stapleton M."/>
            <person name="Strong R."/>
            <person name="Sun E."/>
            <person name="Svirskas R."/>
            <person name="Tector C."/>
            <person name="Turner R."/>
            <person name="Venter E."/>
            <person name="Wang A.H."/>
            <person name="Wang X."/>
            <person name="Wang Z.-Y."/>
            <person name="Wassarman D.A."/>
            <person name="Weinstock G.M."/>
            <person name="Weissenbach J."/>
            <person name="Williams S.M."/>
            <person name="Woodage T."/>
            <person name="Worley K.C."/>
            <person name="Wu D."/>
            <person name="Yang S."/>
            <person name="Yao Q.A."/>
            <person name="Ye J."/>
            <person name="Yeh R.-F."/>
            <person name="Zaveri J.S."/>
            <person name="Zhan M."/>
            <person name="Zhang G."/>
            <person name="Zhao Q."/>
            <person name="Zheng L."/>
            <person name="Zheng X.H."/>
            <person name="Zhong F.N."/>
            <person name="Zhong W."/>
            <person name="Zhou X."/>
            <person name="Zhu S.C."/>
            <person name="Zhu X."/>
            <person name="Smith H.O."/>
            <person name="Gibbs R.A."/>
            <person name="Myers E.W."/>
            <person name="Rubin G.M."/>
            <person name="Venter J.C."/>
        </authorList>
    </citation>
    <scope>NUCLEOTIDE SEQUENCE [LARGE SCALE GENOMIC DNA]</scope>
    <source>
        <strain>Berkeley</strain>
    </source>
</reference>
<reference key="4">
    <citation type="journal article" date="2002" name="Genome Biol.">
        <title>Annotation of the Drosophila melanogaster euchromatic genome: a systematic review.</title>
        <authorList>
            <person name="Misra S."/>
            <person name="Crosby M.A."/>
            <person name="Mungall C.J."/>
            <person name="Matthews B.B."/>
            <person name="Campbell K.S."/>
            <person name="Hradecky P."/>
            <person name="Huang Y."/>
            <person name="Kaminker J.S."/>
            <person name="Millburn G.H."/>
            <person name="Prochnik S.E."/>
            <person name="Smith C.D."/>
            <person name="Tupy J.L."/>
            <person name="Whitfield E.J."/>
            <person name="Bayraktaroglu L."/>
            <person name="Berman B.P."/>
            <person name="Bettencourt B.R."/>
            <person name="Celniker S.E."/>
            <person name="de Grey A.D.N.J."/>
            <person name="Drysdale R.A."/>
            <person name="Harris N.L."/>
            <person name="Richter J."/>
            <person name="Russo S."/>
            <person name="Schroeder A.J."/>
            <person name="Shu S.Q."/>
            <person name="Stapleton M."/>
            <person name="Yamada C."/>
            <person name="Ashburner M."/>
            <person name="Gelbart W.M."/>
            <person name="Rubin G.M."/>
            <person name="Lewis S.E."/>
        </authorList>
    </citation>
    <scope>GENOME REANNOTATION</scope>
    <source>
        <strain>Berkeley</strain>
    </source>
</reference>
<reference key="5">
    <citation type="journal article" date="2002" name="Genome Biol.">
        <title>A Drosophila full-length cDNA resource.</title>
        <authorList>
            <person name="Stapleton M."/>
            <person name="Carlson J.W."/>
            <person name="Brokstein P."/>
            <person name="Yu C."/>
            <person name="Champe M."/>
            <person name="George R.A."/>
            <person name="Guarin H."/>
            <person name="Kronmiller B."/>
            <person name="Pacleb J.M."/>
            <person name="Park S."/>
            <person name="Wan K.H."/>
            <person name="Rubin G.M."/>
            <person name="Celniker S.E."/>
        </authorList>
    </citation>
    <scope>NUCLEOTIDE SEQUENCE [LARGE SCALE MRNA] (ISOFORM 1)</scope>
    <source>
        <strain>Berkeley</strain>
        <tissue>Embryo</tissue>
    </source>
</reference>
<reference key="6">
    <citation type="journal article" date="2005" name="Cell">
        <title>GPCR signaling is required for blood-brain barrier formation in Drosophila.</title>
        <authorList>
            <person name="Schwabe T."/>
            <person name="Bainton R.J."/>
            <person name="Fetter R.D."/>
            <person name="Heberlein U."/>
            <person name="Gaul U."/>
        </authorList>
    </citation>
    <scope>FUNCTION</scope>
    <scope>SUBCELLULAR LOCATION</scope>
    <scope>TISSUE SPECIFICITY</scope>
</reference>
<reference key="7">
    <citation type="journal article" date="2005" name="Genes Dev.">
        <title>Locomotion defects, together with Pins, regulates heterotrimeric G-protein signaling during Drosophila neuroblast asymmetric divisions.</title>
        <authorList>
            <person name="Yu F."/>
            <person name="Wang H."/>
            <person name="Qian H."/>
            <person name="Kaushik R."/>
            <person name="Bownes M."/>
            <person name="Yang X."/>
            <person name="Chia W."/>
        </authorList>
    </citation>
    <scope>FUNCTION</scope>
    <scope>INTERACTION WITH GALPHAI</scope>
    <scope>SUBCELLULAR LOCATION</scope>
</reference>
<reference key="8">
    <citation type="journal article" date="2011" name="Aging Cell">
        <title>Regulation of longevity by regulator of G-protein signaling (RGS) protein, Loco.</title>
        <authorList>
            <person name="Lin Y.R."/>
            <person name="Kim K."/>
            <person name="Yang Y."/>
            <person name="Ivessa A."/>
            <person name="Sadoshima J."/>
            <person name="Park Y."/>
        </authorList>
    </citation>
    <scope>FUNCTION</scope>
    <scope>DISRUPTION PHENOTYPE</scope>
</reference>
<keyword id="KW-0025">Alternative splicing</keyword>
<keyword id="KW-0131">Cell cycle</keyword>
<keyword id="KW-0132">Cell division</keyword>
<keyword id="KW-1003">Cell membrane</keyword>
<keyword id="KW-0963">Cytoplasm</keyword>
<keyword id="KW-0217">Developmental protein</keyword>
<keyword id="KW-0221">Differentiation</keyword>
<keyword id="KW-0343">GTPase activation</keyword>
<keyword id="KW-0472">Membrane</keyword>
<keyword id="KW-0896">Oogenesis</keyword>
<keyword id="KW-1185">Reference proteome</keyword>
<keyword id="KW-0677">Repeat</keyword>
<proteinExistence type="evidence at protein level"/>
<accession>Q9VCX1</accession>
<accession>Q9NGQ0</accession>
<accession>Q9UB06</accession>
<accession>Q9XYX8</accession>
<comment type="function">
    <text evidence="7 8 9 10 11">Acts as a regulator of G protein signaling (RGS). Modulates G protein alpha subunits nucleotide exchange and hydrolysis activities by functioning either as a GTPase-activating protein (GAP), thereby driving G protein alpha subunits into their inactive GDP-bound form, or as a GDP-dissociation inhibitor (GDI). Confers GDI and GAP activities on G(i) alpha subunit Galphai. Confers GAP activity on G(o)-alpha subunit Galphao and G(i) alpha subunit Galphai. Involved in the dorsal-ventral axis formation of the egg. Acts as a G-protein signaling for glial cell differentiation during embryogenesis; Galphai, Galphao and the G-protein coupled receptor, moody, are required in the surface glia to achieve effective insulation of the nerve cord. May be essential for nurse cell dumping during oogenesis. Required in neuroblast asymmetrical cell division. Plays a role in stress resistance and life span control.</text>
</comment>
<comment type="subunit">
    <text evidence="7 9">Interacts (via GoLoco and RGS domains) with Galphai (via GDP- or GTP-bound forms).</text>
</comment>
<comment type="subcellular location">
    <subcellularLocation>
        <location>Cytoplasm</location>
    </subcellularLocation>
    <subcellularLocation>
        <location>Cell membrane</location>
    </subcellularLocation>
    <subcellularLocation>
        <location>Apical cell membrane</location>
    </subcellularLocation>
    <text>Recruited from the cytosol to the plasma membrane by the G(i) alpha subunit. Colocalizes with moody at the plasma membrane. Localizes as a crescent to the apical cortex in interphase and forms an apical crescent and segregates into the apical daughter cell at telophase. Colocalizes with Galphai and raps/pins at the apical cortex throughout mitosis.</text>
</comment>
<comment type="alternative products">
    <event type="alternative splicing"/>
    <isoform>
        <id>Q9VCX1-1</id>
        <name>1</name>
        <sequence type="displayed"/>
    </isoform>
    <isoform>
        <id>Q9VCX1-2</id>
        <name>2</name>
        <name>LOCO C1</name>
        <sequence type="described" ref="VSP_041115 VSP_041118"/>
    </isoform>
    <isoform>
        <id>Q9VCX1-3</id>
        <name>3</name>
        <name>LOCO C2</name>
        <sequence type="described" ref="VSP_041116 VSP_041117"/>
    </isoform>
    <isoform>
        <id>Q9VCX1-4</id>
        <name>4</name>
        <name>LOCO C3</name>
        <sequence type="described" ref="VSP_041114"/>
    </isoform>
</comment>
<comment type="tissue specificity">
    <text evidence="10">Expressed in surface and longitudinal glial cells, gut and heart (at protein level).</text>
</comment>
<comment type="developmental stage">
    <text evidence="7 8">Expressed both maternally and zygotically. Expressed during oogenesis and embryogenesis. Isoform 3 and isoform 4 are expressed in the germarium at stage 2. Isoform 4 is expressed in the nurse cells at stage 6 until the nurse cells degenerate. Isoform 3 is expressed in the follicle cells at stage 8, in the anterior-dorsal follicles cells from stage 10 until the follicles degenerate. Isoform 2 and isoform 3 are expressed in late stage 12 embryos, onwards. Isoform 2 is expressed in tracheal cells and in lateral glial cells within the CNS in late stage 16 embryos.</text>
</comment>
<comment type="disruption phenotype">
    <text evidence="7 11">Homozygous mutant flies show dorsal-ventral defects in egg (shorter egg length and fused appendages) and embryo patterning. Fail to hatch and show severe glial cell differentiation defects: disruption of intimate glial-glial cell contact and absence of glial cell processes enwrapping neuronal cell bodies and axones, resulting in loss of the blood-brain barrier (BBB) formation. Heterozygous flies show an enhanced stress resistance, fat content and extended lifespan.</text>
</comment>
<gene>
    <name type="primary">loco</name>
    <name type="ORF">CG5248</name>
</gene>
<dbReference type="EMBL" id="AF130744">
    <property type="protein sequence ID" value="AAD24580.1"/>
    <property type="molecule type" value="mRNA"/>
</dbReference>
<dbReference type="EMBL" id="AF130745">
    <property type="protein sequence ID" value="AAD24581.1"/>
    <property type="molecule type" value="mRNA"/>
</dbReference>
<dbReference type="EMBL" id="AF245455">
    <property type="protein sequence ID" value="AAF62552.1"/>
    <property type="molecule type" value="mRNA"/>
</dbReference>
<dbReference type="EMBL" id="AE014297">
    <property type="protein sequence ID" value="AAF56034.2"/>
    <property type="molecule type" value="Genomic_DNA"/>
</dbReference>
<dbReference type="EMBL" id="AY118939">
    <property type="protein sequence ID" value="AAM50799.1"/>
    <property type="molecule type" value="mRNA"/>
</dbReference>
<dbReference type="RefSeq" id="NP_732773.1">
    <molecule id="Q9VCX1-1"/>
    <property type="nucleotide sequence ID" value="NM_170030.2"/>
</dbReference>
<dbReference type="RefSeq" id="NP_732776.1">
    <molecule id="Q9VCX1-2"/>
    <property type="nucleotide sequence ID" value="NM_170033.3"/>
</dbReference>
<dbReference type="SMR" id="Q9VCX1"/>
<dbReference type="BioGRID" id="67624">
    <property type="interactions" value="15"/>
</dbReference>
<dbReference type="FunCoup" id="Q9VCX1">
    <property type="interactions" value="842"/>
</dbReference>
<dbReference type="IntAct" id="Q9VCX1">
    <property type="interactions" value="1"/>
</dbReference>
<dbReference type="STRING" id="7227.FBpp0083666"/>
<dbReference type="PaxDb" id="7227-FBpp0083666"/>
<dbReference type="DNASU" id="42672"/>
<dbReference type="EnsemblMetazoa" id="FBtr0084273">
    <molecule id="Q9VCX1-1"/>
    <property type="protein sequence ID" value="FBpp0083666"/>
    <property type="gene ID" value="FBgn0020278"/>
</dbReference>
<dbReference type="EnsemblMetazoa" id="FBtr0084276">
    <molecule id="Q9VCX1-2"/>
    <property type="protein sequence ID" value="FBpp0083669"/>
    <property type="gene ID" value="FBgn0020278"/>
</dbReference>
<dbReference type="GeneID" id="42672"/>
<dbReference type="KEGG" id="dme:Dmel_CG5248"/>
<dbReference type="UCSC" id="CG5248-RD">
    <molecule id="Q9VCX1-1"/>
    <property type="organism name" value="d. melanogaster"/>
</dbReference>
<dbReference type="AGR" id="FB:FBgn0020278"/>
<dbReference type="FlyBase" id="FBgn0020278">
    <property type="gene designation" value="loco"/>
</dbReference>
<dbReference type="VEuPathDB" id="VectorBase:FBgn0020278"/>
<dbReference type="eggNOG" id="KOG3528">
    <property type="taxonomic scope" value="Eukaryota"/>
</dbReference>
<dbReference type="eggNOG" id="KOG3589">
    <property type="taxonomic scope" value="Eukaryota"/>
</dbReference>
<dbReference type="GeneTree" id="ENSGT00940000161426"/>
<dbReference type="HOGENOM" id="CLU_002190_0_0_1"/>
<dbReference type="InParanoid" id="Q9VCX1"/>
<dbReference type="OMA" id="HKSEWSK"/>
<dbReference type="OrthoDB" id="196547at2759"/>
<dbReference type="PhylomeDB" id="Q9VCX1"/>
<dbReference type="Reactome" id="R-DME-418594">
    <property type="pathway name" value="G alpha (i) signalling events"/>
</dbReference>
<dbReference type="SignaLink" id="Q9VCX1"/>
<dbReference type="BioGRID-ORCS" id="42672">
    <property type="hits" value="0 hits in 3 CRISPR screens"/>
</dbReference>
<dbReference type="GenomeRNAi" id="42672"/>
<dbReference type="PRO" id="PR:Q9VCX1"/>
<dbReference type="Proteomes" id="UP000000803">
    <property type="component" value="Chromosome 3R"/>
</dbReference>
<dbReference type="Bgee" id="FBgn0020278">
    <property type="expression patterns" value="Expressed in adult midgut enterocyte in digestive tract and 217 other cell types or tissues"/>
</dbReference>
<dbReference type="ExpressionAtlas" id="Q9VCX1">
    <property type="expression patterns" value="baseline and differential"/>
</dbReference>
<dbReference type="GO" id="GO:0045179">
    <property type="term" value="C:apical cortex"/>
    <property type="evidence" value="ECO:0000314"/>
    <property type="project" value="UniProtKB"/>
</dbReference>
<dbReference type="GO" id="GO:0016324">
    <property type="term" value="C:apical plasma membrane"/>
    <property type="evidence" value="ECO:0007669"/>
    <property type="project" value="UniProtKB-SubCell"/>
</dbReference>
<dbReference type="GO" id="GO:0005737">
    <property type="term" value="C:cytoplasm"/>
    <property type="evidence" value="ECO:0000314"/>
    <property type="project" value="UniProtKB"/>
</dbReference>
<dbReference type="GO" id="GO:0005634">
    <property type="term" value="C:nucleus"/>
    <property type="evidence" value="ECO:0000318"/>
    <property type="project" value="GO_Central"/>
</dbReference>
<dbReference type="GO" id="GO:0005886">
    <property type="term" value="C:plasma membrane"/>
    <property type="evidence" value="ECO:0000314"/>
    <property type="project" value="UniProtKB"/>
</dbReference>
<dbReference type="GO" id="GO:0001965">
    <property type="term" value="F:G-protein alpha-subunit binding"/>
    <property type="evidence" value="ECO:0000353"/>
    <property type="project" value="FlyBase"/>
</dbReference>
<dbReference type="GO" id="GO:0005092">
    <property type="term" value="F:GDP-dissociation inhibitor activity"/>
    <property type="evidence" value="ECO:0000314"/>
    <property type="project" value="UniProtKB"/>
</dbReference>
<dbReference type="GO" id="GO:0005096">
    <property type="term" value="F:GTPase activator activity"/>
    <property type="evidence" value="ECO:0000314"/>
    <property type="project" value="UniProtKB"/>
</dbReference>
<dbReference type="GO" id="GO:0055059">
    <property type="term" value="P:asymmetric neuroblast division"/>
    <property type="evidence" value="ECO:0000315"/>
    <property type="project" value="FlyBase"/>
</dbReference>
<dbReference type="GO" id="GO:0032291">
    <property type="term" value="P:axon ensheathment in central nervous system"/>
    <property type="evidence" value="ECO:0000315"/>
    <property type="project" value="UniProtKB"/>
</dbReference>
<dbReference type="GO" id="GO:0030866">
    <property type="term" value="P:cortical actin cytoskeleton organization"/>
    <property type="evidence" value="ECO:0000315"/>
    <property type="project" value="UniProtKB"/>
</dbReference>
<dbReference type="GO" id="GO:0008069">
    <property type="term" value="P:dorsal/ventral axis specification, ovarian follicular epithelium"/>
    <property type="evidence" value="ECO:0000315"/>
    <property type="project" value="FlyBase"/>
</dbReference>
<dbReference type="GO" id="GO:0000578">
    <property type="term" value="P:embryonic axis specification"/>
    <property type="evidence" value="ECO:0000315"/>
    <property type="project" value="UniProtKB"/>
</dbReference>
<dbReference type="GO" id="GO:0060857">
    <property type="term" value="P:establishment of glial blood-brain barrier"/>
    <property type="evidence" value="ECO:0000315"/>
    <property type="project" value="UniProtKB"/>
</dbReference>
<dbReference type="GO" id="GO:0007186">
    <property type="term" value="P:G protein-coupled receptor signaling pathway"/>
    <property type="evidence" value="ECO:0000315"/>
    <property type="project" value="UniProtKB"/>
</dbReference>
<dbReference type="GO" id="GO:0010001">
    <property type="term" value="P:glial cell differentiation"/>
    <property type="evidence" value="ECO:0000315"/>
    <property type="project" value="FlyBase"/>
</dbReference>
<dbReference type="GO" id="GO:0003015">
    <property type="term" value="P:heart process"/>
    <property type="evidence" value="ECO:0000315"/>
    <property type="project" value="FlyBase"/>
</dbReference>
<dbReference type="GO" id="GO:0007310">
    <property type="term" value="P:oocyte dorsal/ventral axis specification"/>
    <property type="evidence" value="ECO:0000315"/>
    <property type="project" value="UniProtKB"/>
</dbReference>
<dbReference type="GO" id="GO:0007300">
    <property type="term" value="P:ovarian nurse cell to oocyte transport"/>
    <property type="evidence" value="ECO:0000315"/>
    <property type="project" value="FlyBase"/>
</dbReference>
<dbReference type="GO" id="GO:0009786">
    <property type="term" value="P:regulation of asymmetric cell division"/>
    <property type="evidence" value="ECO:0000314"/>
    <property type="project" value="UniProtKB"/>
</dbReference>
<dbReference type="GO" id="GO:0008277">
    <property type="term" value="P:regulation of G protein-coupled receptor signaling pathway"/>
    <property type="evidence" value="ECO:0000316"/>
    <property type="project" value="FlyBase"/>
</dbReference>
<dbReference type="GO" id="GO:0009408">
    <property type="term" value="P:response to heat"/>
    <property type="evidence" value="ECO:0000315"/>
    <property type="project" value="UniProtKB"/>
</dbReference>
<dbReference type="GO" id="GO:0006979">
    <property type="term" value="P:response to oxidative stress"/>
    <property type="evidence" value="ECO:0000315"/>
    <property type="project" value="UniProtKB"/>
</dbReference>
<dbReference type="GO" id="GO:0042594">
    <property type="term" value="P:response to starvation"/>
    <property type="evidence" value="ECO:0000315"/>
    <property type="project" value="UniProtKB"/>
</dbReference>
<dbReference type="GO" id="GO:0019991">
    <property type="term" value="P:septate junction assembly"/>
    <property type="evidence" value="ECO:0000315"/>
    <property type="project" value="FlyBase"/>
</dbReference>
<dbReference type="GO" id="GO:0007419">
    <property type="term" value="P:ventral cord development"/>
    <property type="evidence" value="ECO:0000315"/>
    <property type="project" value="FlyBase"/>
</dbReference>
<dbReference type="CDD" id="cd06710">
    <property type="entry name" value="PDZ_RGS12-like"/>
    <property type="match status" value="1"/>
</dbReference>
<dbReference type="CDD" id="cd13162">
    <property type="entry name" value="PTB_RGS12"/>
    <property type="match status" value="1"/>
</dbReference>
<dbReference type="CDD" id="cd01817">
    <property type="entry name" value="RBD1_RGS12_like"/>
    <property type="match status" value="1"/>
</dbReference>
<dbReference type="CDD" id="cd17067">
    <property type="entry name" value="RBD2_RGS12_like"/>
    <property type="match status" value="1"/>
</dbReference>
<dbReference type="CDD" id="cd08706">
    <property type="entry name" value="RGS_R12-like"/>
    <property type="match status" value="1"/>
</dbReference>
<dbReference type="FunFam" id="1.10.167.10:FF:000001">
    <property type="entry name" value="Putative regulator of g-protein signaling 12"/>
    <property type="match status" value="1"/>
</dbReference>
<dbReference type="FunFam" id="2.30.29.30:FF:000642">
    <property type="entry name" value="Regulator of G-protein signaling loco"/>
    <property type="match status" value="1"/>
</dbReference>
<dbReference type="Gene3D" id="1.10.196.10">
    <property type="match status" value="1"/>
</dbReference>
<dbReference type="Gene3D" id="2.30.42.10">
    <property type="match status" value="1"/>
</dbReference>
<dbReference type="Gene3D" id="3.10.20.90">
    <property type="entry name" value="Phosphatidylinositol 3-kinase Catalytic Subunit, Chain A, domain 1"/>
    <property type="match status" value="2"/>
</dbReference>
<dbReference type="Gene3D" id="2.30.29.30">
    <property type="entry name" value="Pleckstrin-homology domain (PH domain)/Phosphotyrosine-binding domain (PTB)"/>
    <property type="match status" value="1"/>
</dbReference>
<dbReference type="Gene3D" id="1.10.167.10">
    <property type="entry name" value="Regulator of G-protein Signalling 4, domain 2"/>
    <property type="match status" value="1"/>
</dbReference>
<dbReference type="InterPro" id="IPR003109">
    <property type="entry name" value="GoLoco_motif"/>
</dbReference>
<dbReference type="InterPro" id="IPR001478">
    <property type="entry name" value="PDZ"/>
</dbReference>
<dbReference type="InterPro" id="IPR036034">
    <property type="entry name" value="PDZ_sf"/>
</dbReference>
<dbReference type="InterPro" id="IPR011993">
    <property type="entry name" value="PH-like_dom_sf"/>
</dbReference>
<dbReference type="InterPro" id="IPR006020">
    <property type="entry name" value="PTB/PI_dom"/>
</dbReference>
<dbReference type="InterPro" id="IPR003116">
    <property type="entry name" value="RBD_dom"/>
</dbReference>
<dbReference type="InterPro" id="IPR016137">
    <property type="entry name" value="RGS"/>
</dbReference>
<dbReference type="InterPro" id="IPR046995">
    <property type="entry name" value="RGS10/12/14-like"/>
</dbReference>
<dbReference type="InterPro" id="IPR036305">
    <property type="entry name" value="RGS_sf"/>
</dbReference>
<dbReference type="InterPro" id="IPR024066">
    <property type="entry name" value="RGS_subdom1/3"/>
</dbReference>
<dbReference type="InterPro" id="IPR044926">
    <property type="entry name" value="RGS_subdomain_2"/>
</dbReference>
<dbReference type="InterPro" id="IPR029071">
    <property type="entry name" value="Ubiquitin-like_domsf"/>
</dbReference>
<dbReference type="PANTHER" id="PTHR45945">
    <property type="entry name" value="REGULATOR OF G-PROTEIN SIGNALING LOCO"/>
    <property type="match status" value="1"/>
</dbReference>
<dbReference type="PANTHER" id="PTHR45945:SF3">
    <property type="entry name" value="REGULATOR OF G-PROTEIN SIGNALING LOCO"/>
    <property type="match status" value="1"/>
</dbReference>
<dbReference type="Pfam" id="PF00595">
    <property type="entry name" value="PDZ"/>
    <property type="match status" value="1"/>
</dbReference>
<dbReference type="Pfam" id="PF02196">
    <property type="entry name" value="RBD"/>
    <property type="match status" value="1"/>
</dbReference>
<dbReference type="Pfam" id="PF00615">
    <property type="entry name" value="RGS"/>
    <property type="match status" value="1"/>
</dbReference>
<dbReference type="PRINTS" id="PR01301">
    <property type="entry name" value="RGSPROTEIN"/>
</dbReference>
<dbReference type="SMART" id="SM00390">
    <property type="entry name" value="GoLoco"/>
    <property type="match status" value="1"/>
</dbReference>
<dbReference type="SMART" id="SM00228">
    <property type="entry name" value="PDZ"/>
    <property type="match status" value="1"/>
</dbReference>
<dbReference type="SMART" id="SM00462">
    <property type="entry name" value="PTB"/>
    <property type="match status" value="1"/>
</dbReference>
<dbReference type="SMART" id="SM00455">
    <property type="entry name" value="RBD"/>
    <property type="match status" value="2"/>
</dbReference>
<dbReference type="SMART" id="SM00315">
    <property type="entry name" value="RGS"/>
    <property type="match status" value="1"/>
</dbReference>
<dbReference type="SUPFAM" id="SSF50156">
    <property type="entry name" value="PDZ domain-like"/>
    <property type="match status" value="1"/>
</dbReference>
<dbReference type="SUPFAM" id="SSF50729">
    <property type="entry name" value="PH domain-like"/>
    <property type="match status" value="1"/>
</dbReference>
<dbReference type="SUPFAM" id="SSF48097">
    <property type="entry name" value="Regulator of G-protein signaling, RGS"/>
    <property type="match status" value="1"/>
</dbReference>
<dbReference type="SUPFAM" id="SSF54236">
    <property type="entry name" value="Ubiquitin-like"/>
    <property type="match status" value="2"/>
</dbReference>
<dbReference type="PROSITE" id="PS50877">
    <property type="entry name" value="GOLOCO"/>
    <property type="match status" value="1"/>
</dbReference>
<dbReference type="PROSITE" id="PS50106">
    <property type="entry name" value="PDZ"/>
    <property type="match status" value="1"/>
</dbReference>
<dbReference type="PROSITE" id="PS01179">
    <property type="entry name" value="PID"/>
    <property type="match status" value="1"/>
</dbReference>
<dbReference type="PROSITE" id="PS50898">
    <property type="entry name" value="RBD"/>
    <property type="match status" value="2"/>
</dbReference>
<dbReference type="PROSITE" id="PS50132">
    <property type="entry name" value="RGS"/>
    <property type="match status" value="1"/>
</dbReference>
<name>RGS_DROME</name>
<protein>
    <recommendedName>
        <fullName>Regulator of G-protein signaling loco</fullName>
        <shortName>RGS</shortName>
    </recommendedName>
    <alternativeName>
        <fullName>Locomotion defects protein</fullName>
        <shortName>Loco</shortName>
    </alternativeName>
</protein>
<evidence type="ECO:0000255" key="1">
    <source>
        <dbReference type="PROSITE-ProRule" id="PRU00097"/>
    </source>
</evidence>
<evidence type="ECO:0000255" key="2">
    <source>
        <dbReference type="PROSITE-ProRule" id="PRU00143"/>
    </source>
</evidence>
<evidence type="ECO:0000255" key="3">
    <source>
        <dbReference type="PROSITE-ProRule" id="PRU00148"/>
    </source>
</evidence>
<evidence type="ECO:0000255" key="4">
    <source>
        <dbReference type="PROSITE-ProRule" id="PRU00171"/>
    </source>
</evidence>
<evidence type="ECO:0000255" key="5">
    <source>
        <dbReference type="PROSITE-ProRule" id="PRU00262"/>
    </source>
</evidence>
<evidence type="ECO:0000256" key="6">
    <source>
        <dbReference type="SAM" id="MobiDB-lite"/>
    </source>
</evidence>
<evidence type="ECO:0000269" key="7">
    <source>
    </source>
</evidence>
<evidence type="ECO:0000269" key="8">
    <source>
    </source>
</evidence>
<evidence type="ECO:0000269" key="9">
    <source>
    </source>
</evidence>
<evidence type="ECO:0000269" key="10">
    <source>
    </source>
</evidence>
<evidence type="ECO:0000269" key="11">
    <source>
    </source>
</evidence>
<evidence type="ECO:0000303" key="12">
    <source>
    </source>
</evidence>
<evidence type="ECO:0000303" key="13">
    <source>
    </source>
</evidence>
<evidence type="ECO:0000305" key="14"/>